<evidence type="ECO:0000255" key="1">
    <source>
        <dbReference type="HAMAP-Rule" id="MF_00051"/>
    </source>
</evidence>
<name>GLYA_BACC2</name>
<protein>
    <recommendedName>
        <fullName evidence="1">Serine hydroxymethyltransferase</fullName>
        <shortName evidence="1">SHMT</shortName>
        <shortName evidence="1">Serine methylase</shortName>
        <ecNumber evidence="1">2.1.2.1</ecNumber>
    </recommendedName>
</protein>
<sequence>MDHLKRQDEKVFAAIEAELGRQRSKIELIASENFVSEAVMEAQGSVLTNKYAEGYPGKRYYGGCEHVDVVEDIARDRVKEIFGAEHVNVQPHSGAQANMAVYFTILEQGDTVLGMNLSHGGHLTHGSPVNFSGVQYNFVEYGVDADSHRINYDDVLAKAKEHKPKLIVAGASAYPRVIDFKRFREIADEVGAYLMVDMAHIAGLVAAGLHPNPVPHAHFVTTTTHKTLRGPRGGMILCEEKFAKQIDKSIFPGIQGGPLMHVIAAKAVAFGETLQEDFKTYAQNIINNANRLAEGLQKEGLTLVSGGTDNHLILIDVRNLEITGKVAEHVLDEVGITVNKNTIPFETASPFVTSGVRIGTAAVTSRGFGLEEMDEIASLIAYTLKNHENEAALEEARKRVEALTSKFSMYPNL</sequence>
<dbReference type="EC" id="2.1.2.1" evidence="1"/>
<dbReference type="EMBL" id="CP001186">
    <property type="protein sequence ID" value="ACK98303.1"/>
    <property type="molecule type" value="Genomic_DNA"/>
</dbReference>
<dbReference type="RefSeq" id="WP_000349800.1">
    <property type="nucleotide sequence ID" value="NC_011772.1"/>
</dbReference>
<dbReference type="SMR" id="B7IQW9"/>
<dbReference type="KEGG" id="bcg:BCG9842_B5513"/>
<dbReference type="HOGENOM" id="CLU_022477_2_1_9"/>
<dbReference type="UniPathway" id="UPA00193"/>
<dbReference type="UniPathway" id="UPA00288">
    <property type="reaction ID" value="UER01023"/>
</dbReference>
<dbReference type="Proteomes" id="UP000006744">
    <property type="component" value="Chromosome"/>
</dbReference>
<dbReference type="GO" id="GO:0005829">
    <property type="term" value="C:cytosol"/>
    <property type="evidence" value="ECO:0007669"/>
    <property type="project" value="TreeGrafter"/>
</dbReference>
<dbReference type="GO" id="GO:0004372">
    <property type="term" value="F:glycine hydroxymethyltransferase activity"/>
    <property type="evidence" value="ECO:0007669"/>
    <property type="project" value="UniProtKB-UniRule"/>
</dbReference>
<dbReference type="GO" id="GO:0030170">
    <property type="term" value="F:pyridoxal phosphate binding"/>
    <property type="evidence" value="ECO:0007669"/>
    <property type="project" value="UniProtKB-UniRule"/>
</dbReference>
<dbReference type="GO" id="GO:0019264">
    <property type="term" value="P:glycine biosynthetic process from serine"/>
    <property type="evidence" value="ECO:0007669"/>
    <property type="project" value="UniProtKB-UniRule"/>
</dbReference>
<dbReference type="GO" id="GO:0035999">
    <property type="term" value="P:tetrahydrofolate interconversion"/>
    <property type="evidence" value="ECO:0007669"/>
    <property type="project" value="UniProtKB-UniRule"/>
</dbReference>
<dbReference type="CDD" id="cd00378">
    <property type="entry name" value="SHMT"/>
    <property type="match status" value="1"/>
</dbReference>
<dbReference type="FunFam" id="3.40.640.10:FF:000001">
    <property type="entry name" value="Serine hydroxymethyltransferase"/>
    <property type="match status" value="1"/>
</dbReference>
<dbReference type="FunFam" id="3.90.1150.10:FF:000003">
    <property type="entry name" value="Serine hydroxymethyltransferase"/>
    <property type="match status" value="1"/>
</dbReference>
<dbReference type="Gene3D" id="3.90.1150.10">
    <property type="entry name" value="Aspartate Aminotransferase, domain 1"/>
    <property type="match status" value="1"/>
</dbReference>
<dbReference type="Gene3D" id="3.40.640.10">
    <property type="entry name" value="Type I PLP-dependent aspartate aminotransferase-like (Major domain)"/>
    <property type="match status" value="1"/>
</dbReference>
<dbReference type="HAMAP" id="MF_00051">
    <property type="entry name" value="SHMT"/>
    <property type="match status" value="1"/>
</dbReference>
<dbReference type="InterPro" id="IPR015424">
    <property type="entry name" value="PyrdxlP-dep_Trfase"/>
</dbReference>
<dbReference type="InterPro" id="IPR015421">
    <property type="entry name" value="PyrdxlP-dep_Trfase_major"/>
</dbReference>
<dbReference type="InterPro" id="IPR015422">
    <property type="entry name" value="PyrdxlP-dep_Trfase_small"/>
</dbReference>
<dbReference type="InterPro" id="IPR001085">
    <property type="entry name" value="Ser_HO-MeTrfase"/>
</dbReference>
<dbReference type="InterPro" id="IPR049943">
    <property type="entry name" value="Ser_HO-MeTrfase-like"/>
</dbReference>
<dbReference type="InterPro" id="IPR019798">
    <property type="entry name" value="Ser_HO-MeTrfase_PLP_BS"/>
</dbReference>
<dbReference type="InterPro" id="IPR039429">
    <property type="entry name" value="SHMT-like_dom"/>
</dbReference>
<dbReference type="NCBIfam" id="NF000586">
    <property type="entry name" value="PRK00011.1"/>
    <property type="match status" value="1"/>
</dbReference>
<dbReference type="PANTHER" id="PTHR11680">
    <property type="entry name" value="SERINE HYDROXYMETHYLTRANSFERASE"/>
    <property type="match status" value="1"/>
</dbReference>
<dbReference type="PANTHER" id="PTHR11680:SF35">
    <property type="entry name" value="SERINE HYDROXYMETHYLTRANSFERASE 1"/>
    <property type="match status" value="1"/>
</dbReference>
<dbReference type="Pfam" id="PF00464">
    <property type="entry name" value="SHMT"/>
    <property type="match status" value="1"/>
</dbReference>
<dbReference type="PIRSF" id="PIRSF000412">
    <property type="entry name" value="SHMT"/>
    <property type="match status" value="1"/>
</dbReference>
<dbReference type="SUPFAM" id="SSF53383">
    <property type="entry name" value="PLP-dependent transferases"/>
    <property type="match status" value="1"/>
</dbReference>
<dbReference type="PROSITE" id="PS00096">
    <property type="entry name" value="SHMT"/>
    <property type="match status" value="1"/>
</dbReference>
<feature type="chain" id="PRO_1000116819" description="Serine hydroxymethyltransferase">
    <location>
        <begin position="1"/>
        <end position="413"/>
    </location>
</feature>
<feature type="binding site" evidence="1">
    <location>
        <position position="117"/>
    </location>
    <ligand>
        <name>(6S)-5,6,7,8-tetrahydrofolate</name>
        <dbReference type="ChEBI" id="CHEBI:57453"/>
    </ligand>
</feature>
<feature type="binding site" evidence="1">
    <location>
        <begin position="121"/>
        <end position="123"/>
    </location>
    <ligand>
        <name>(6S)-5,6,7,8-tetrahydrofolate</name>
        <dbReference type="ChEBI" id="CHEBI:57453"/>
    </ligand>
</feature>
<feature type="binding site" evidence="1">
    <location>
        <position position="239"/>
    </location>
    <ligand>
        <name>(6S)-5,6,7,8-tetrahydrofolate</name>
        <dbReference type="ChEBI" id="CHEBI:57453"/>
    </ligand>
</feature>
<feature type="binding site" evidence="1">
    <location>
        <begin position="349"/>
        <end position="351"/>
    </location>
    <ligand>
        <name>(6S)-5,6,7,8-tetrahydrofolate</name>
        <dbReference type="ChEBI" id="CHEBI:57453"/>
    </ligand>
</feature>
<feature type="site" description="Plays an important role in substrate specificity" evidence="1">
    <location>
        <position position="225"/>
    </location>
</feature>
<feature type="modified residue" description="N6-(pyridoxal phosphate)lysine" evidence="1">
    <location>
        <position position="226"/>
    </location>
</feature>
<comment type="function">
    <text evidence="1">Catalyzes the reversible interconversion of serine and glycine with tetrahydrofolate (THF) serving as the one-carbon carrier. This reaction serves as the major source of one-carbon groups required for the biosynthesis of purines, thymidylate, methionine, and other important biomolecules. Also exhibits THF-independent aldolase activity toward beta-hydroxyamino acids, producing glycine and aldehydes, via a retro-aldol mechanism.</text>
</comment>
<comment type="catalytic activity">
    <reaction evidence="1">
        <text>(6R)-5,10-methylene-5,6,7,8-tetrahydrofolate + glycine + H2O = (6S)-5,6,7,8-tetrahydrofolate + L-serine</text>
        <dbReference type="Rhea" id="RHEA:15481"/>
        <dbReference type="ChEBI" id="CHEBI:15377"/>
        <dbReference type="ChEBI" id="CHEBI:15636"/>
        <dbReference type="ChEBI" id="CHEBI:33384"/>
        <dbReference type="ChEBI" id="CHEBI:57305"/>
        <dbReference type="ChEBI" id="CHEBI:57453"/>
        <dbReference type="EC" id="2.1.2.1"/>
    </reaction>
</comment>
<comment type="cofactor">
    <cofactor evidence="1">
        <name>pyridoxal 5'-phosphate</name>
        <dbReference type="ChEBI" id="CHEBI:597326"/>
    </cofactor>
</comment>
<comment type="pathway">
    <text evidence="1">One-carbon metabolism; tetrahydrofolate interconversion.</text>
</comment>
<comment type="pathway">
    <text evidence="1">Amino-acid biosynthesis; glycine biosynthesis; glycine from L-serine: step 1/1.</text>
</comment>
<comment type="subunit">
    <text evidence="1">Homodimer.</text>
</comment>
<comment type="subcellular location">
    <subcellularLocation>
        <location evidence="1">Cytoplasm</location>
    </subcellularLocation>
</comment>
<comment type="similarity">
    <text evidence="1">Belongs to the SHMT family.</text>
</comment>
<proteinExistence type="inferred from homology"/>
<organism>
    <name type="scientific">Bacillus cereus (strain G9842)</name>
    <dbReference type="NCBI Taxonomy" id="405531"/>
    <lineage>
        <taxon>Bacteria</taxon>
        <taxon>Bacillati</taxon>
        <taxon>Bacillota</taxon>
        <taxon>Bacilli</taxon>
        <taxon>Bacillales</taxon>
        <taxon>Bacillaceae</taxon>
        <taxon>Bacillus</taxon>
        <taxon>Bacillus cereus group</taxon>
    </lineage>
</organism>
<gene>
    <name evidence="1" type="primary">glyA</name>
    <name type="ordered locus">BCG9842_B5513</name>
</gene>
<accession>B7IQW9</accession>
<reference key="1">
    <citation type="submission" date="2008-10" db="EMBL/GenBank/DDBJ databases">
        <title>Genome sequence of Bacillus cereus G9842.</title>
        <authorList>
            <person name="Dodson R.J."/>
            <person name="Durkin A.S."/>
            <person name="Rosovitz M.J."/>
            <person name="Rasko D.A."/>
            <person name="Hoffmaster A."/>
            <person name="Ravel J."/>
            <person name="Sutton G."/>
        </authorList>
    </citation>
    <scope>NUCLEOTIDE SEQUENCE [LARGE SCALE GENOMIC DNA]</scope>
    <source>
        <strain>G9842</strain>
    </source>
</reference>
<keyword id="KW-0028">Amino-acid biosynthesis</keyword>
<keyword id="KW-0963">Cytoplasm</keyword>
<keyword id="KW-0554">One-carbon metabolism</keyword>
<keyword id="KW-0663">Pyridoxal phosphate</keyword>
<keyword id="KW-0808">Transferase</keyword>